<feature type="transit peptide" description="Mitochondrion" evidence="2">
    <location>
        <begin position="1"/>
        <end position="45"/>
    </location>
</feature>
<feature type="chain" id="PRO_0000408729" description="Altered inheritance of mitochondria protein 9, mitochondrial">
    <location>
        <begin position="46"/>
        <end position="639"/>
    </location>
</feature>
<feature type="region of interest" description="Disordered" evidence="3">
    <location>
        <begin position="619"/>
        <end position="639"/>
    </location>
</feature>
<protein>
    <recommendedName>
        <fullName>Altered inheritance of mitochondria protein 9, mitochondrial</fullName>
    </recommendedName>
    <alternativeName>
        <fullName>Found in mitochondrial proteome protein 29</fullName>
    </alternativeName>
</protein>
<evidence type="ECO:0000250" key="1"/>
<evidence type="ECO:0000255" key="2"/>
<evidence type="ECO:0000256" key="3">
    <source>
        <dbReference type="SAM" id="MobiDB-lite"/>
    </source>
</evidence>
<evidence type="ECO:0000305" key="4"/>
<organism>
    <name type="scientific">Vanderwaltozyma polyspora (strain ATCC 22028 / DSM 70294 / BCRC 21397 / CBS 2163 / NBRC 10782 / NRRL Y-8283 / UCD 57-17)</name>
    <name type="common">Kluyveromyces polysporus</name>
    <dbReference type="NCBI Taxonomy" id="436907"/>
    <lineage>
        <taxon>Eukaryota</taxon>
        <taxon>Fungi</taxon>
        <taxon>Dikarya</taxon>
        <taxon>Ascomycota</taxon>
        <taxon>Saccharomycotina</taxon>
        <taxon>Saccharomycetes</taxon>
        <taxon>Saccharomycetales</taxon>
        <taxon>Saccharomycetaceae</taxon>
        <taxon>Vanderwaltozyma</taxon>
    </lineage>
</organism>
<sequence length="639" mass="72652">MLMSKAPKLGNLLSKNSIKIVSGSKLRCNLKYINVRYISDTPDKVFTKLSDENDPQRDAFFKYSWGSWMKNDAIEKEKRVTKFSIEGLNDVLNDIYEQTKVEAKVTKEGAIKPPSFNKNLTVSLPHNLTVKNIGVINPNEKVQITSMASIHEGKHHRIYKIDTNLGKSFVLRVPYALENEDTIAQRLKSEVASMDFADLKLGIKVPKTYCFGINGLNPIRQPFILQEYIDGKLLMRDWSPLENDTSDGKPPVALQDVINKLSEFQSKLISMKFNGFGSIYFAKDAEELENVPELYDNETNEELKGRWKLGYSVERCLWKKKSFLPTDKLKTFLGPWSINKPTDIIRATGLLEAENAKVRLGLKEADSSSEAVESGVLKSQVATFENLVKLAPSLINSETKSIPNISDLLLPRLKHPDLDPMNVLVTENNEVYLLDFEGSSIKPLILQNAPQFVAYDGPKVYNIEKEVPDYEKLSDSEKAQYEFMYKRTRNQFLWEMAFNKTNPEFISIVAPPVKLLRSPYIAAIERKTDEEYILVDEAMIQLKEIWDIFTKNGLVKNSPYPIEYTTEQLEQHGKDLLKFHEKLISQPFAATQGWIPQDMFENLVAGGVLVKNKSGDYEVSSEAQSEVQSEVQSSTENKD</sequence>
<gene>
    <name type="primary">AIM9</name>
    <name type="synonym">FMP29</name>
    <name type="ORF">Kpol_387p10</name>
</gene>
<comment type="subcellular location">
    <subcellularLocation>
        <location evidence="1">Mitochondrion</location>
    </subcellularLocation>
</comment>
<comment type="similarity">
    <text evidence="4">Belongs to the AIM9 family.</text>
</comment>
<proteinExistence type="inferred from homology"/>
<accession>A7TRX9</accession>
<keyword id="KW-0496">Mitochondrion</keyword>
<keyword id="KW-1185">Reference proteome</keyword>
<keyword id="KW-0809">Transit peptide</keyword>
<name>AIM9_VANPO</name>
<dbReference type="EMBL" id="DS480490">
    <property type="protein sequence ID" value="EDO14984.1"/>
    <property type="molecule type" value="Genomic_DNA"/>
</dbReference>
<dbReference type="RefSeq" id="XP_001642842.1">
    <property type="nucleotide sequence ID" value="XM_001642792.1"/>
</dbReference>
<dbReference type="FunCoup" id="A7TRX9">
    <property type="interactions" value="27"/>
</dbReference>
<dbReference type="STRING" id="436907.A7TRX9"/>
<dbReference type="GeneID" id="5543026"/>
<dbReference type="KEGG" id="vpo:Kpol_387p10"/>
<dbReference type="eggNOG" id="ENOG502QV1E">
    <property type="taxonomic scope" value="Eukaryota"/>
</dbReference>
<dbReference type="HOGENOM" id="CLU_019189_0_1_1"/>
<dbReference type="InParanoid" id="A7TRX9"/>
<dbReference type="OMA" id="GWIPQDM"/>
<dbReference type="OrthoDB" id="2968323at2759"/>
<dbReference type="PhylomeDB" id="A7TRX9"/>
<dbReference type="Proteomes" id="UP000000267">
    <property type="component" value="Unassembled WGS sequence"/>
</dbReference>
<dbReference type="GO" id="GO:0005739">
    <property type="term" value="C:mitochondrion"/>
    <property type="evidence" value="ECO:0007669"/>
    <property type="project" value="UniProtKB-SubCell"/>
</dbReference>
<dbReference type="InterPro" id="IPR011009">
    <property type="entry name" value="Kinase-like_dom_sf"/>
</dbReference>
<dbReference type="InterPro" id="IPR051035">
    <property type="entry name" value="Mito_inheritance_9"/>
</dbReference>
<dbReference type="PANTHER" id="PTHR36091">
    <property type="entry name" value="ALTERED INHERITANCE OF MITOCHONDRIA PROTEIN 9, MITOCHONDRIAL"/>
    <property type="match status" value="1"/>
</dbReference>
<dbReference type="PANTHER" id="PTHR36091:SF1">
    <property type="entry name" value="ALTERED INHERITANCE OF MITOCHONDRIA PROTEIN 9, MITOCHONDRIAL"/>
    <property type="match status" value="1"/>
</dbReference>
<dbReference type="SUPFAM" id="SSF56112">
    <property type="entry name" value="Protein kinase-like (PK-like)"/>
    <property type="match status" value="1"/>
</dbReference>
<reference key="1">
    <citation type="journal article" date="2007" name="Proc. Natl. Acad. Sci. U.S.A.">
        <title>Independent sorting-out of thousands of duplicated gene pairs in two yeast species descended from a whole-genome duplication.</title>
        <authorList>
            <person name="Scannell D.R."/>
            <person name="Frank A.C."/>
            <person name="Conant G.C."/>
            <person name="Byrne K.P."/>
            <person name="Woolfit M."/>
            <person name="Wolfe K.H."/>
        </authorList>
    </citation>
    <scope>NUCLEOTIDE SEQUENCE [LARGE SCALE GENOMIC DNA]</scope>
    <source>
        <strain>ATCC 22028 / DSM 70294 / BCRC 21397 / CBS 2163 / NBRC 10782 / NRRL Y-8283 / UCD 57-17</strain>
    </source>
</reference>